<comment type="function">
    <text evidence="1">Involved in membrane remodeling.</text>
</comment>
<comment type="subcellular location">
    <subcellularLocation>
        <location evidence="4">Endoplasmic reticulum membrane</location>
        <topology evidence="2">Multi-pass membrane protein</topology>
    </subcellularLocation>
    <subcellularLocation>
        <location evidence="4">Vacuole membrane</location>
        <topology evidence="2">Multi-pass membrane protein</topology>
    </subcellularLocation>
</comment>
<comment type="tissue specificity">
    <text evidence="4">Restricted to flowers and pollen.</text>
</comment>
<comment type="induction">
    <text evidence="5">Activated by DUO1 in sperm cells (SC) of mature pollen.</text>
</comment>
<comment type="similarity">
    <text evidence="8">Belongs to the plant DMP1 protein family.</text>
</comment>
<comment type="sequence caution" evidence="8">
    <conflict type="erroneous termination">
        <sequence resource="EMBL-CDS" id="ABK28729"/>
    </conflict>
    <text>Extended C-terminus.</text>
</comment>
<organism>
    <name type="scientific">Arabidopsis thaliana</name>
    <name type="common">Mouse-ear cress</name>
    <dbReference type="NCBI Taxonomy" id="3702"/>
    <lineage>
        <taxon>Eukaryota</taxon>
        <taxon>Viridiplantae</taxon>
        <taxon>Streptophyta</taxon>
        <taxon>Embryophyta</taxon>
        <taxon>Tracheophyta</taxon>
        <taxon>Spermatophyta</taxon>
        <taxon>Magnoliopsida</taxon>
        <taxon>eudicotyledons</taxon>
        <taxon>Gunneridae</taxon>
        <taxon>Pentapetalae</taxon>
        <taxon>rosids</taxon>
        <taxon>malvids</taxon>
        <taxon>Brassicales</taxon>
        <taxon>Brassicaceae</taxon>
        <taxon>Camelineae</taxon>
        <taxon>Arabidopsis</taxon>
    </lineage>
</organism>
<name>DMP9_ARATH</name>
<evidence type="ECO:0000250" key="1">
    <source>
        <dbReference type="UniProtKB" id="Q9LVF4"/>
    </source>
</evidence>
<evidence type="ECO:0000255" key="2"/>
<evidence type="ECO:0000256" key="3">
    <source>
        <dbReference type="SAM" id="MobiDB-lite"/>
    </source>
</evidence>
<evidence type="ECO:0000269" key="4">
    <source>
    </source>
</evidence>
<evidence type="ECO:0000269" key="5">
    <source>
    </source>
</evidence>
<evidence type="ECO:0000303" key="6">
    <source>
    </source>
</evidence>
<evidence type="ECO:0000303" key="7">
    <source>
    </source>
</evidence>
<evidence type="ECO:0000305" key="8"/>
<evidence type="ECO:0000312" key="9">
    <source>
        <dbReference type="Araport" id="AT5G39650"/>
    </source>
</evidence>
<evidence type="ECO:0000312" key="10">
    <source>
        <dbReference type="EMBL" id="BAB08897.1"/>
    </source>
</evidence>
<accession>Q9FK96</accession>
<accession>A0MFK4</accession>
<gene>
    <name evidence="6" type="primary">DMP9</name>
    <name evidence="7" type="synonym">DAU2</name>
    <name evidence="9" type="ordered locus">At5g39650</name>
    <name evidence="10" type="ORF">MIJ24.15</name>
</gene>
<feature type="chain" id="PRO_0000441616" description="Protein DMP9" evidence="2">
    <location>
        <begin position="1"/>
        <end position="244"/>
    </location>
</feature>
<feature type="transmembrane region" description="Helical" evidence="2">
    <location>
        <begin position="71"/>
        <end position="91"/>
    </location>
</feature>
<feature type="transmembrane region" description="Helical" evidence="2">
    <location>
        <begin position="99"/>
        <end position="119"/>
    </location>
</feature>
<feature type="transmembrane region" description="Helical" evidence="2">
    <location>
        <begin position="173"/>
        <end position="193"/>
    </location>
</feature>
<feature type="transmembrane region" description="Helical" evidence="2">
    <location>
        <begin position="213"/>
        <end position="233"/>
    </location>
</feature>
<feature type="region of interest" description="Disordered" evidence="3">
    <location>
        <begin position="1"/>
        <end position="56"/>
    </location>
</feature>
<feature type="compositionally biased region" description="Pro residues" evidence="3">
    <location>
        <begin position="18"/>
        <end position="29"/>
    </location>
</feature>
<feature type="compositionally biased region" description="Low complexity" evidence="3">
    <location>
        <begin position="30"/>
        <end position="45"/>
    </location>
</feature>
<proteinExistence type="evidence at transcript level"/>
<sequence>MEKTEESVGIRVYTATPPQKPSPSPPSRSPKPVLISSLPSLPSGAAAGGGRGRKRRMVAQGVQKTVSKTSMLVNFLPTGTLLMFEMVLPSIYRDGDCNGINTLMIHLLLLLCAMSCFFFHFTDSFKASDGKIYYGFVTPRGLAVFMKPPPPEFGGGDVIAEAEIPVTDDRYKLTVNDFVHAVMSVLVFMAIAFSDRRVTGCLFPGKEKEMDQVMESFPIMVGIVCSALFLVFPTTRYGVGCMTG</sequence>
<protein>
    <recommendedName>
        <fullName evidence="6">Protein DMP9</fullName>
        <shortName evidence="6">AtDMP9</shortName>
    </recommendedName>
    <alternativeName>
        <fullName evidence="7">Protein DUO1-ACTIVATED UNKNOWN 2</fullName>
    </alternativeName>
</protein>
<reference key="1">
    <citation type="journal article" date="1998" name="DNA Res.">
        <title>Structural analysis of Arabidopsis thaliana chromosome 5. VI. Sequence features of the regions of 1,367,185 bp covered by 19 physically assigned P1 and TAC clones.</title>
        <authorList>
            <person name="Kotani H."/>
            <person name="Nakamura Y."/>
            <person name="Sato S."/>
            <person name="Asamizu E."/>
            <person name="Kaneko T."/>
            <person name="Miyajima N."/>
            <person name="Tabata S."/>
        </authorList>
    </citation>
    <scope>NUCLEOTIDE SEQUENCE [LARGE SCALE GENOMIC DNA]</scope>
    <source>
        <strain>cv. Columbia</strain>
    </source>
</reference>
<reference key="2">
    <citation type="journal article" date="2017" name="Plant J.">
        <title>Araport11: a complete reannotation of the Arabidopsis thaliana reference genome.</title>
        <authorList>
            <person name="Cheng C.Y."/>
            <person name="Krishnakumar V."/>
            <person name="Chan A.P."/>
            <person name="Thibaud-Nissen F."/>
            <person name="Schobel S."/>
            <person name="Town C.D."/>
        </authorList>
    </citation>
    <scope>GENOME REANNOTATION</scope>
    <source>
        <strain>cv. Columbia</strain>
    </source>
</reference>
<reference key="3">
    <citation type="journal article" date="2006" name="Plant Biotechnol. J.">
        <title>Simultaneous high-throughput recombinational cloning of open reading frames in closed and open configurations.</title>
        <authorList>
            <person name="Underwood B.A."/>
            <person name="Vanderhaeghen R."/>
            <person name="Whitford R."/>
            <person name="Town C.D."/>
            <person name="Hilson P."/>
        </authorList>
    </citation>
    <scope>NUCLEOTIDE SEQUENCE [LARGE SCALE MRNA]</scope>
    <source>
        <strain>cv. Columbia</strain>
    </source>
</reference>
<reference key="4">
    <citation type="submission" date="2002-03" db="EMBL/GenBank/DDBJ databases">
        <title>Full-length cDNA from Arabidopsis thaliana.</title>
        <authorList>
            <person name="Brover V.V."/>
            <person name="Troukhan M.E."/>
            <person name="Alexandrov N.A."/>
            <person name="Lu Y.-P."/>
            <person name="Flavell R.B."/>
            <person name="Feldmann K.A."/>
        </authorList>
    </citation>
    <scope>NUCLEOTIDE SEQUENCE [LARGE SCALE MRNA]</scope>
</reference>
<reference key="5">
    <citation type="journal article" date="2010" name="Plant Biol. 12 Suppl.">
        <title>Expression, localisation and phylogeny of a novel family of plant-specific membrane proteins.</title>
        <authorList>
            <person name="Kasaras A."/>
            <person name="Kunze R."/>
        </authorList>
    </citation>
    <scope>TISSUE SPECIFICITY</scope>
    <scope>SUBCELLULAR LOCATION</scope>
    <scope>GENE FAMILY</scope>
    <scope>NOMENCLATURE</scope>
    <source>
        <strain>cv. Columbia</strain>
    </source>
</reference>
<reference key="6">
    <citation type="journal article" date="2011" name="Plant Cell">
        <title>The R2R3 MYB transcription factor DUO1 activates a male germline-specific regulon essential for sperm cell differentiation in Arabidopsis.</title>
        <authorList>
            <person name="Borg M."/>
            <person name="Brownfield L."/>
            <person name="Khatab H."/>
            <person name="Sidorova A."/>
            <person name="Lingaya M."/>
            <person name="Twell D."/>
        </authorList>
    </citation>
    <scope>INDUCTION BY DUO1</scope>
</reference>
<keyword id="KW-0256">Endoplasmic reticulum</keyword>
<keyword id="KW-0472">Membrane</keyword>
<keyword id="KW-1185">Reference proteome</keyword>
<keyword id="KW-0812">Transmembrane</keyword>
<keyword id="KW-1133">Transmembrane helix</keyword>
<keyword id="KW-0926">Vacuole</keyword>
<dbReference type="EMBL" id="AB012243">
    <property type="protein sequence ID" value="BAB08897.1"/>
    <property type="molecule type" value="Genomic_DNA"/>
</dbReference>
<dbReference type="EMBL" id="CP002688">
    <property type="protein sequence ID" value="AED94459.1"/>
    <property type="molecule type" value="Genomic_DNA"/>
</dbReference>
<dbReference type="EMBL" id="DQ447017">
    <property type="protein sequence ID" value="ABE66204.1"/>
    <property type="molecule type" value="mRNA"/>
</dbReference>
<dbReference type="EMBL" id="DQ653330">
    <property type="protein sequence ID" value="ABK28729.1"/>
    <property type="status" value="ALT_SEQ"/>
    <property type="molecule type" value="mRNA"/>
</dbReference>
<dbReference type="EMBL" id="AY084319">
    <property type="protein sequence ID" value="AAM60906.1"/>
    <property type="molecule type" value="mRNA"/>
</dbReference>
<dbReference type="RefSeq" id="NP_198781.1">
    <property type="nucleotide sequence ID" value="NM_123327.2"/>
</dbReference>
<dbReference type="STRING" id="3702.Q9FK96"/>
<dbReference type="GlyGen" id="Q9FK96">
    <property type="glycosylation" value="1 site"/>
</dbReference>
<dbReference type="PaxDb" id="3702-AT5G39650.1"/>
<dbReference type="ProteomicsDB" id="247056"/>
<dbReference type="EnsemblPlants" id="AT5G39650.1">
    <property type="protein sequence ID" value="AT5G39650.1"/>
    <property type="gene ID" value="AT5G39650"/>
</dbReference>
<dbReference type="GeneID" id="833961"/>
<dbReference type="Gramene" id="AT5G39650.1">
    <property type="protein sequence ID" value="AT5G39650.1"/>
    <property type="gene ID" value="AT5G39650"/>
</dbReference>
<dbReference type="KEGG" id="ath:AT5G39650"/>
<dbReference type="Araport" id="AT5G39650"/>
<dbReference type="TAIR" id="AT5G39650">
    <property type="gene designation" value="DAU2"/>
</dbReference>
<dbReference type="eggNOG" id="ENOG502QPMT">
    <property type="taxonomic scope" value="Eukaryota"/>
</dbReference>
<dbReference type="HOGENOM" id="CLU_075936_2_1_1"/>
<dbReference type="InParanoid" id="Q9FK96"/>
<dbReference type="OMA" id="ICTFSCF"/>
<dbReference type="OrthoDB" id="762629at2759"/>
<dbReference type="PhylomeDB" id="Q9FK96"/>
<dbReference type="PRO" id="PR:Q9FK96"/>
<dbReference type="Proteomes" id="UP000006548">
    <property type="component" value="Chromosome 5"/>
</dbReference>
<dbReference type="ExpressionAtlas" id="Q9FK96">
    <property type="expression patterns" value="baseline and differential"/>
</dbReference>
<dbReference type="GO" id="GO:0005783">
    <property type="term" value="C:endoplasmic reticulum"/>
    <property type="evidence" value="ECO:0000314"/>
    <property type="project" value="TAIR"/>
</dbReference>
<dbReference type="GO" id="GO:0005789">
    <property type="term" value="C:endoplasmic reticulum membrane"/>
    <property type="evidence" value="ECO:0007669"/>
    <property type="project" value="UniProtKB-SubCell"/>
</dbReference>
<dbReference type="GO" id="GO:0009705">
    <property type="term" value="C:plant-type vacuole membrane"/>
    <property type="evidence" value="ECO:0000314"/>
    <property type="project" value="TAIR"/>
</dbReference>
<dbReference type="GO" id="GO:0009567">
    <property type="term" value="P:double fertilization forming a zygote and endosperm"/>
    <property type="evidence" value="ECO:0000315"/>
    <property type="project" value="TAIR"/>
</dbReference>
<dbReference type="GO" id="GO:0010256">
    <property type="term" value="P:endomembrane system organization"/>
    <property type="evidence" value="ECO:0000250"/>
    <property type="project" value="UniProtKB"/>
</dbReference>
<dbReference type="GO" id="GO:0048235">
    <property type="term" value="P:pollen sperm cell differentiation"/>
    <property type="evidence" value="ECO:0000270"/>
    <property type="project" value="TAIR"/>
</dbReference>
<dbReference type="InterPro" id="IPR007770">
    <property type="entry name" value="DMP"/>
</dbReference>
<dbReference type="PANTHER" id="PTHR31621">
    <property type="entry name" value="PROTEIN DMP3"/>
    <property type="match status" value="1"/>
</dbReference>
<dbReference type="PANTHER" id="PTHR31621:SF11">
    <property type="entry name" value="PROTEIN DMP8-RELATED"/>
    <property type="match status" value="1"/>
</dbReference>
<dbReference type="Pfam" id="PF05078">
    <property type="entry name" value="DUF679"/>
    <property type="match status" value="1"/>
</dbReference>